<organismHost>
    <name type="scientific">Beta macrocarpa</name>
    <name type="common">Beet</name>
    <name type="synonym">Beta vulgaris subsp. macrocarpa</name>
    <dbReference type="NCBI Taxonomy" id="343494"/>
</organismHost>
<organismHost>
    <name type="scientific">Beta vulgaris</name>
    <name type="common">Sugar beet</name>
    <dbReference type="NCBI Taxonomy" id="161934"/>
</organismHost>
<organismHost>
    <name type="scientific">Spinacia oleracea</name>
    <name type="common">Spinach</name>
    <dbReference type="NCBI Taxonomy" id="3562"/>
</organismHost>
<dbReference type="EMBL" id="M36897">
    <property type="protein sequence ID" value="AAA42800.1"/>
    <property type="molecule type" value="Genomic_RNA"/>
</dbReference>
<dbReference type="PIR" id="C44503">
    <property type="entry name" value="C44503"/>
</dbReference>
<dbReference type="InterPro" id="IPR007004">
    <property type="entry name" value="BNYVV_p31"/>
</dbReference>
<dbReference type="Pfam" id="PF04920">
    <property type="entry name" value="BNYVV_p31"/>
    <property type="match status" value="1"/>
</dbReference>
<accession>P19231</accession>
<organism>
    <name type="scientific">Beet necrotic yellow vein mosaic virus (isolate Yugoslavia/G1)</name>
    <name type="common">BNYVV</name>
    <dbReference type="NCBI Taxonomy" id="12257"/>
    <lineage>
        <taxon>Viruses</taxon>
        <taxon>Riboviria</taxon>
        <taxon>Orthornavirae</taxon>
        <taxon>Kitrinoviricota</taxon>
        <taxon>Alsuviricetes</taxon>
        <taxon>Hepelivirales</taxon>
        <taxon>Benyviridae</taxon>
        <taxon>Benyvirus</taxon>
        <taxon>Beet necrotic yellow vein virus</taxon>
    </lineage>
</organism>
<protein>
    <recommendedName>
        <fullName>RNA-4 uncharacterized 31.9 kDa protein</fullName>
    </recommendedName>
</protein>
<reference key="1">
    <citation type="journal article" date="1985" name="J. Gen. Virol.">
        <title>Nucleotide sequence analysis of RNA-3 and RNA-4 of beet necrotic yellow vein virus, isolates F2 and G1.</title>
        <authorList>
            <person name="Bouzoubaa S."/>
            <person name="Guilley H."/>
            <person name="Jonard G."/>
            <person name="Richards K."/>
            <person name="Putz C."/>
        </authorList>
    </citation>
    <scope>NUCLEOTIDE SEQUENCE [GENOMIC RNA]</scope>
</reference>
<name>Y32K_BNYVG</name>
<proteinExistence type="predicted"/>
<feature type="chain" id="PRO_0000222502" description="RNA-4 uncharacterized 31.9 kDa protein">
    <location>
        <begin position="1"/>
        <end position="282"/>
    </location>
</feature>
<sequence length="282" mass="31869">MADGEICRCQVTDPPLIRHEDYDCTARMVQKRIEIGPLGVLLNLNMLFHMSRVRHTDVYPCLNNIMSVSVSLDVPVSSGVGVGRARVLIFTTSRERVGIFHGWQVVPGCFLNAPCYSGVDVLSDELCEANIINTSVSSVAMFNRSYKPEDVWILLLTSSTCYGYHDVVVDIEQCTLPSNIDGCVHCSGVCYFNDNHCFCGRRDSNPSNPPCFQFIKDCNELYGTNETKQFICDLVGDANLDSVNTLTKEGWRRFCDVLWNTTYGDVESRTFARFLWFVFYHD</sequence>